<accession>Q6ADC8</accession>
<dbReference type="EMBL" id="AE016822">
    <property type="protein sequence ID" value="AAT89616.1"/>
    <property type="molecule type" value="Genomic_DNA"/>
</dbReference>
<dbReference type="RefSeq" id="WP_011186603.1">
    <property type="nucleotide sequence ID" value="NC_006087.1"/>
</dbReference>
<dbReference type="SMR" id="Q6ADC8"/>
<dbReference type="STRING" id="281090.Lxx18850"/>
<dbReference type="KEGG" id="lxx:Lxx18850"/>
<dbReference type="eggNOG" id="COG0291">
    <property type="taxonomic scope" value="Bacteria"/>
</dbReference>
<dbReference type="HOGENOM" id="CLU_169643_4_2_11"/>
<dbReference type="Proteomes" id="UP000001306">
    <property type="component" value="Chromosome"/>
</dbReference>
<dbReference type="GO" id="GO:0022625">
    <property type="term" value="C:cytosolic large ribosomal subunit"/>
    <property type="evidence" value="ECO:0007669"/>
    <property type="project" value="TreeGrafter"/>
</dbReference>
<dbReference type="GO" id="GO:0003735">
    <property type="term" value="F:structural constituent of ribosome"/>
    <property type="evidence" value="ECO:0007669"/>
    <property type="project" value="InterPro"/>
</dbReference>
<dbReference type="GO" id="GO:0006412">
    <property type="term" value="P:translation"/>
    <property type="evidence" value="ECO:0007669"/>
    <property type="project" value="UniProtKB-UniRule"/>
</dbReference>
<dbReference type="FunFam" id="4.10.410.60:FF:000001">
    <property type="entry name" value="50S ribosomal protein L35"/>
    <property type="match status" value="1"/>
</dbReference>
<dbReference type="Gene3D" id="4.10.410.60">
    <property type="match status" value="1"/>
</dbReference>
<dbReference type="HAMAP" id="MF_00514">
    <property type="entry name" value="Ribosomal_bL35"/>
    <property type="match status" value="1"/>
</dbReference>
<dbReference type="InterPro" id="IPR001706">
    <property type="entry name" value="Ribosomal_bL35"/>
</dbReference>
<dbReference type="InterPro" id="IPR021137">
    <property type="entry name" value="Ribosomal_bL35-like"/>
</dbReference>
<dbReference type="InterPro" id="IPR018265">
    <property type="entry name" value="Ribosomal_bL35_CS"/>
</dbReference>
<dbReference type="InterPro" id="IPR037229">
    <property type="entry name" value="Ribosomal_bL35_sf"/>
</dbReference>
<dbReference type="NCBIfam" id="TIGR00001">
    <property type="entry name" value="rpmI_bact"/>
    <property type="match status" value="1"/>
</dbReference>
<dbReference type="PANTHER" id="PTHR33343">
    <property type="entry name" value="54S RIBOSOMAL PROTEIN BL35M"/>
    <property type="match status" value="1"/>
</dbReference>
<dbReference type="PANTHER" id="PTHR33343:SF1">
    <property type="entry name" value="LARGE RIBOSOMAL SUBUNIT PROTEIN BL35M"/>
    <property type="match status" value="1"/>
</dbReference>
<dbReference type="Pfam" id="PF01632">
    <property type="entry name" value="Ribosomal_L35p"/>
    <property type="match status" value="1"/>
</dbReference>
<dbReference type="PRINTS" id="PR00064">
    <property type="entry name" value="RIBOSOMALL35"/>
</dbReference>
<dbReference type="SUPFAM" id="SSF143034">
    <property type="entry name" value="L35p-like"/>
    <property type="match status" value="1"/>
</dbReference>
<dbReference type="PROSITE" id="PS00936">
    <property type="entry name" value="RIBOSOMAL_L35"/>
    <property type="match status" value="1"/>
</dbReference>
<organism>
    <name type="scientific">Leifsonia xyli subsp. xyli (strain CTCB07)</name>
    <dbReference type="NCBI Taxonomy" id="281090"/>
    <lineage>
        <taxon>Bacteria</taxon>
        <taxon>Bacillati</taxon>
        <taxon>Actinomycetota</taxon>
        <taxon>Actinomycetes</taxon>
        <taxon>Micrococcales</taxon>
        <taxon>Microbacteriaceae</taxon>
        <taxon>Leifsonia</taxon>
    </lineage>
</organism>
<protein>
    <recommendedName>
        <fullName evidence="1">Large ribosomal subunit protein bL35</fullName>
    </recommendedName>
    <alternativeName>
        <fullName evidence="2">50S ribosomal protein L35</fullName>
    </alternativeName>
</protein>
<gene>
    <name evidence="1" type="primary">rpmI</name>
    <name type="ordered locus">Lxx18850</name>
</gene>
<name>RL35_LEIXX</name>
<feature type="chain" id="PRO_0000258697" description="Large ribosomal subunit protein bL35">
    <location>
        <begin position="1"/>
        <end position="64"/>
    </location>
</feature>
<comment type="similarity">
    <text evidence="1">Belongs to the bacterial ribosomal protein bL35 family.</text>
</comment>
<reference key="1">
    <citation type="journal article" date="2004" name="Mol. Plant Microbe Interact.">
        <title>The genome sequence of the Gram-positive sugarcane pathogen Leifsonia xyli subsp. xyli.</title>
        <authorList>
            <person name="Monteiro-Vitorello C.B."/>
            <person name="Camargo L.E.A."/>
            <person name="Van Sluys M.A."/>
            <person name="Kitajima J.P."/>
            <person name="Truffi D."/>
            <person name="do Amaral A.M."/>
            <person name="Harakava R."/>
            <person name="de Oliveira J.C.F."/>
            <person name="Wood D."/>
            <person name="de Oliveira M.C."/>
            <person name="Miyaki C.Y."/>
            <person name="Takita M.A."/>
            <person name="da Silva A.C.R."/>
            <person name="Furlan L.R."/>
            <person name="Carraro D.M."/>
            <person name="Camarotte G."/>
            <person name="Almeida N.F. Jr."/>
            <person name="Carrer H."/>
            <person name="Coutinho L.L."/>
            <person name="El-Dorry H.A."/>
            <person name="Ferro M.I.T."/>
            <person name="Gagliardi P.R."/>
            <person name="Giglioti E."/>
            <person name="Goldman M.H.S."/>
            <person name="Goldman G.H."/>
            <person name="Kimura E.T."/>
            <person name="Ferro E.S."/>
            <person name="Kuramae E.E."/>
            <person name="Lemos E.G.M."/>
            <person name="Lemos M.V.F."/>
            <person name="Mauro S.M.Z."/>
            <person name="Machado M.A."/>
            <person name="Marino C.L."/>
            <person name="Menck C.F."/>
            <person name="Nunes L.R."/>
            <person name="Oliveira R.C."/>
            <person name="Pereira G.G."/>
            <person name="Siqueira W."/>
            <person name="de Souza A.A."/>
            <person name="Tsai S.M."/>
            <person name="Zanca A.S."/>
            <person name="Simpson A.J.G."/>
            <person name="Brumbley S.M."/>
            <person name="Setubal J.C."/>
        </authorList>
    </citation>
    <scope>NUCLEOTIDE SEQUENCE [LARGE SCALE GENOMIC DNA]</scope>
    <source>
        <strain>CTCB07</strain>
    </source>
</reference>
<sequence length="64" mass="7291">MPKQKTHSGAKKRFKITGSGKVMKQQAGMRHNLEVKGSDRKRRLNADQVVPEVDAKFVRRMLGK</sequence>
<proteinExistence type="inferred from homology"/>
<keyword id="KW-1185">Reference proteome</keyword>
<keyword id="KW-0687">Ribonucleoprotein</keyword>
<keyword id="KW-0689">Ribosomal protein</keyword>
<evidence type="ECO:0000255" key="1">
    <source>
        <dbReference type="HAMAP-Rule" id="MF_00514"/>
    </source>
</evidence>
<evidence type="ECO:0000305" key="2"/>